<dbReference type="EMBL" id="CP000243">
    <property type="protein sequence ID" value="ABE09973.1"/>
    <property type="status" value="ALT_INIT"/>
    <property type="molecule type" value="Genomic_DNA"/>
</dbReference>
<dbReference type="RefSeq" id="WP_000591379.1">
    <property type="nucleotide sequence ID" value="NZ_CP064825.1"/>
</dbReference>
<dbReference type="SMR" id="Q1R3U1"/>
<dbReference type="KEGG" id="eci:UTI89_C4561"/>
<dbReference type="HOGENOM" id="CLU_008287_18_5_6"/>
<dbReference type="Proteomes" id="UP000001952">
    <property type="component" value="Chromosome"/>
</dbReference>
<dbReference type="GO" id="GO:0009279">
    <property type="term" value="C:cell outer membrane"/>
    <property type="evidence" value="ECO:0007669"/>
    <property type="project" value="UniProtKB-SubCell"/>
</dbReference>
<dbReference type="GO" id="GO:0046930">
    <property type="term" value="C:pore complex"/>
    <property type="evidence" value="ECO:0007669"/>
    <property type="project" value="UniProtKB-KW"/>
</dbReference>
<dbReference type="GO" id="GO:0015420">
    <property type="term" value="F:ABC-type vitamin B12 transporter activity"/>
    <property type="evidence" value="ECO:0007669"/>
    <property type="project" value="InterPro"/>
</dbReference>
<dbReference type="GO" id="GO:0046872">
    <property type="term" value="F:metal ion binding"/>
    <property type="evidence" value="ECO:0007669"/>
    <property type="project" value="UniProtKB-KW"/>
</dbReference>
<dbReference type="GO" id="GO:0015288">
    <property type="term" value="F:porin activity"/>
    <property type="evidence" value="ECO:0007669"/>
    <property type="project" value="UniProtKB-KW"/>
</dbReference>
<dbReference type="GO" id="GO:0006811">
    <property type="term" value="P:monoatomic ion transport"/>
    <property type="evidence" value="ECO:0007669"/>
    <property type="project" value="UniProtKB-KW"/>
</dbReference>
<dbReference type="CDD" id="cd01347">
    <property type="entry name" value="ligand_gated_channel"/>
    <property type="match status" value="1"/>
</dbReference>
<dbReference type="FunFam" id="2.170.130.10:FF:000002">
    <property type="entry name" value="Vitamin B12 transporter BtuB"/>
    <property type="match status" value="1"/>
</dbReference>
<dbReference type="FunFam" id="2.40.170.20:FF:000001">
    <property type="entry name" value="Vitamin B12 transporter BtuB"/>
    <property type="match status" value="1"/>
</dbReference>
<dbReference type="Gene3D" id="2.40.170.20">
    <property type="entry name" value="TonB-dependent receptor, beta-barrel domain"/>
    <property type="match status" value="1"/>
</dbReference>
<dbReference type="Gene3D" id="2.170.130.10">
    <property type="entry name" value="TonB-dependent receptor, plug domain"/>
    <property type="match status" value="1"/>
</dbReference>
<dbReference type="HAMAP" id="MF_01531">
    <property type="entry name" value="BtuB"/>
    <property type="match status" value="1"/>
</dbReference>
<dbReference type="InterPro" id="IPR010101">
    <property type="entry name" value="B12_transptr_BtuB"/>
</dbReference>
<dbReference type="InterPro" id="IPR012910">
    <property type="entry name" value="Plug_dom"/>
</dbReference>
<dbReference type="InterPro" id="IPR037066">
    <property type="entry name" value="Plug_dom_sf"/>
</dbReference>
<dbReference type="InterPro" id="IPR039426">
    <property type="entry name" value="TonB-dep_rcpt-like"/>
</dbReference>
<dbReference type="InterPro" id="IPR000531">
    <property type="entry name" value="TonB-dep_rcpt_b-brl"/>
</dbReference>
<dbReference type="InterPro" id="IPR010916">
    <property type="entry name" value="TonB_box_CS"/>
</dbReference>
<dbReference type="InterPro" id="IPR036942">
    <property type="entry name" value="TonB_rcpt_b-brl_sf"/>
</dbReference>
<dbReference type="InterPro" id="IPR010917">
    <property type="entry name" value="TonB_rcpt_CS"/>
</dbReference>
<dbReference type="NCBIfam" id="NF007926">
    <property type="entry name" value="PRK10641.1"/>
    <property type="match status" value="1"/>
</dbReference>
<dbReference type="NCBIfam" id="TIGR01779">
    <property type="entry name" value="TonB-B12"/>
    <property type="match status" value="1"/>
</dbReference>
<dbReference type="PANTHER" id="PTHR30069:SF53">
    <property type="entry name" value="COLICIN I RECEPTOR-RELATED"/>
    <property type="match status" value="1"/>
</dbReference>
<dbReference type="PANTHER" id="PTHR30069">
    <property type="entry name" value="TONB-DEPENDENT OUTER MEMBRANE RECEPTOR"/>
    <property type="match status" value="1"/>
</dbReference>
<dbReference type="Pfam" id="PF07715">
    <property type="entry name" value="Plug"/>
    <property type="match status" value="1"/>
</dbReference>
<dbReference type="Pfam" id="PF00593">
    <property type="entry name" value="TonB_dep_Rec_b-barrel"/>
    <property type="match status" value="1"/>
</dbReference>
<dbReference type="SUPFAM" id="SSF56935">
    <property type="entry name" value="Porins"/>
    <property type="match status" value="1"/>
</dbReference>
<dbReference type="PROSITE" id="PS00430">
    <property type="entry name" value="TONB_DEPENDENT_REC_1"/>
    <property type="match status" value="1"/>
</dbReference>
<dbReference type="PROSITE" id="PS01156">
    <property type="entry name" value="TONB_DEPENDENT_REC_2"/>
    <property type="match status" value="1"/>
</dbReference>
<dbReference type="PROSITE" id="PS52016">
    <property type="entry name" value="TONB_DEPENDENT_REC_3"/>
    <property type="match status" value="1"/>
</dbReference>
<keyword id="KW-0106">Calcium</keyword>
<keyword id="KW-0998">Cell outer membrane</keyword>
<keyword id="KW-0406">Ion transport</keyword>
<keyword id="KW-0472">Membrane</keyword>
<keyword id="KW-0479">Metal-binding</keyword>
<keyword id="KW-0626">Porin</keyword>
<keyword id="KW-0732">Signal</keyword>
<keyword id="KW-0798">TonB box</keyword>
<keyword id="KW-0812">Transmembrane</keyword>
<keyword id="KW-1134">Transmembrane beta strand</keyword>
<keyword id="KW-0813">Transport</keyword>
<name>BTUB_ECOUT</name>
<accession>Q1R3U1</accession>
<sequence length="614" mass="68415">MIKKASLLTACSVTAFSAWAQDTSPDTLVVTANRFEQPRSTVLAPTTVVTRQDIDRWQSTSVNDVLRRLPGVDITQNGGSGQLSSIFIRGTNASHVLVLIDGVRLNLAGVSGSADLSQFPIALVQRVEYIRGPRSAVYGSDAIGGVVNIITTRDHPGTEISAGWGSNSYQNYDVSTQQQLGDKTRVTLLGDYAHTHGYDVVAYGNTGTQAQPDNDGFLSKTLYGALEHNFTDVWSGFVRGYGYDNRTNYDAYYSPGLPLVDTRKLYSQSWDAGLRYNGELIKSQLITSYSHSKDYNYDPHYGRYDSSATLDEMKQYTVQWANNIIIGHGNIGAGVDWQKQSTAPGTAYVEDGYDQRNTGIYLTGLQQVGDFTFEGAGRSDDNSQFGRHGTWQTSAGWEFIEGYRFIASYGTSYKAPNLGQLYGTYGNPNLNPEKSKQWEGAFEGLTAGVNWRISGYRNDVSDLIDYDDHTLKYYNEGKARIKGVEATANFDTGPLTHTVSYDYVDARNAITDTPLLRRAKQQVKYQLDWQLYDFDWGITYQYLGTRYDKDYSSYPYQTVKMGGVSLWDLAVAYPVTSHLTVRGKIANLFDKDYETVYGYQTAGREYTLSGSYTF</sequence>
<gene>
    <name evidence="1" type="primary">btuB</name>
    <name type="ordered locus">UTI89_C4561</name>
</gene>
<feature type="signal peptide" evidence="1">
    <location>
        <begin position="1"/>
        <end position="20"/>
    </location>
</feature>
<feature type="chain" id="PRO_0000292757" description="Vitamin B12 transporter BtuB">
    <location>
        <begin position="21"/>
        <end position="614"/>
    </location>
</feature>
<feature type="transmembrane region" description="Beta stranded" evidence="1">
    <location>
        <begin position="158"/>
        <end position="165"/>
    </location>
</feature>
<feature type="transmembrane region" description="Beta stranded" evidence="1">
    <location>
        <begin position="169"/>
        <end position="178"/>
    </location>
</feature>
<feature type="transmembrane region" description="Beta stranded" evidence="1">
    <location>
        <begin position="184"/>
        <end position="195"/>
    </location>
</feature>
<feature type="transmembrane region" description="Beta stranded" evidence="1">
    <location>
        <begin position="217"/>
        <end position="227"/>
    </location>
</feature>
<feature type="transmembrane region" description="Beta stranded" evidence="1">
    <location>
        <begin position="232"/>
        <end position="248"/>
    </location>
</feature>
<feature type="transmembrane region" description="Beta stranded" evidence="1">
    <location>
        <begin position="263"/>
        <end position="277"/>
    </location>
</feature>
<feature type="transmembrane region" description="Beta stranded" evidence="1">
    <location>
        <begin position="279"/>
        <end position="296"/>
    </location>
</feature>
<feature type="transmembrane region" description="Beta stranded" evidence="1">
    <location>
        <begin position="309"/>
        <end position="325"/>
    </location>
</feature>
<feature type="transmembrane region" description="Beta stranded" evidence="1">
    <location>
        <begin position="328"/>
        <end position="337"/>
    </location>
</feature>
<feature type="transmembrane region" description="Beta stranded" evidence="1">
    <location>
        <begin position="353"/>
        <end position="369"/>
    </location>
</feature>
<feature type="transmembrane region" description="Beta stranded" evidence="1">
    <location>
        <begin position="371"/>
        <end position="381"/>
    </location>
</feature>
<feature type="transmembrane region" description="Beta stranded" evidence="1">
    <location>
        <begin position="385"/>
        <end position="400"/>
    </location>
</feature>
<feature type="transmembrane region" description="Beta stranded" evidence="1">
    <location>
        <begin position="403"/>
        <end position="417"/>
    </location>
</feature>
<feature type="transmembrane region" description="Beta stranded" evidence="1">
    <location>
        <begin position="434"/>
        <end position="443"/>
    </location>
</feature>
<feature type="transmembrane region" description="Beta stranded" evidence="1">
    <location>
        <begin position="449"/>
        <end position="458"/>
    </location>
</feature>
<feature type="transmembrane region" description="Beta stranded" evidence="1">
    <location>
        <begin position="473"/>
        <end position="490"/>
    </location>
</feature>
<feature type="transmembrane region" description="Beta stranded" evidence="1">
    <location>
        <begin position="494"/>
        <end position="509"/>
    </location>
</feature>
<feature type="transmembrane region" description="Beta stranded" evidence="1">
    <location>
        <begin position="517"/>
        <end position="529"/>
    </location>
</feature>
<feature type="transmembrane region" description="Beta stranded" evidence="1">
    <location>
        <begin position="535"/>
        <end position="550"/>
    </location>
</feature>
<feature type="transmembrane region" description="Beta stranded" evidence="1">
    <location>
        <begin position="558"/>
        <end position="572"/>
    </location>
</feature>
<feature type="transmembrane region" description="Beta stranded" evidence="1">
    <location>
        <begin position="585"/>
        <end position="596"/>
    </location>
</feature>
<feature type="transmembrane region" description="Beta stranded" evidence="1">
    <location>
        <begin position="602"/>
        <end position="614"/>
    </location>
</feature>
<feature type="domain" description="TBDR plug" evidence="2">
    <location>
        <begin position="38"/>
        <end position="152"/>
    </location>
</feature>
<feature type="domain" description="TBDR beta-barrel" evidence="2">
    <location>
        <begin position="155"/>
        <end position="614"/>
    </location>
</feature>
<feature type="short sequence motif" description="TonB box">
    <location>
        <begin position="26"/>
        <end position="33"/>
    </location>
</feature>
<feature type="short sequence motif" description="TonB C-terminal box">
    <location>
        <begin position="597"/>
        <end position="614"/>
    </location>
</feature>
<feature type="binding site" evidence="1">
    <location>
        <position position="83"/>
    </location>
    <ligand>
        <name>cyanocob(III)alamin</name>
        <dbReference type="ChEBI" id="CHEBI:17439"/>
    </ligand>
</feature>
<feature type="binding site" evidence="1">
    <location>
        <position position="85"/>
    </location>
    <ligand>
        <name>cyanocob(III)alamin</name>
        <dbReference type="ChEBI" id="CHEBI:17439"/>
    </ligand>
</feature>
<feature type="binding site" evidence="1">
    <location>
        <position position="92"/>
    </location>
    <ligand>
        <name>cyanocob(III)alamin</name>
        <dbReference type="ChEBI" id="CHEBI:17439"/>
    </ligand>
</feature>
<feature type="binding site" evidence="1">
    <location>
        <begin position="110"/>
        <end position="111"/>
    </location>
    <ligand>
        <name>cyanocob(III)alamin</name>
        <dbReference type="ChEBI" id="CHEBI:17439"/>
    </ligand>
</feature>
<feature type="binding site" evidence="1">
    <location>
        <position position="199"/>
    </location>
    <ligand>
        <name>Ca(2+)</name>
        <dbReference type="ChEBI" id="CHEBI:29108"/>
        <label>1</label>
    </ligand>
</feature>
<feature type="binding site" evidence="1">
    <location>
        <position position="211"/>
    </location>
    <ligand>
        <name>Ca(2+)</name>
        <dbReference type="ChEBI" id="CHEBI:29108"/>
        <label>1</label>
    </ligand>
</feature>
<feature type="binding site" evidence="1">
    <location>
        <position position="213"/>
    </location>
    <ligand>
        <name>Ca(2+)</name>
        <dbReference type="ChEBI" id="CHEBI:29108"/>
        <label>1</label>
    </ligand>
</feature>
<feature type="binding site" evidence="1">
    <location>
        <position position="213"/>
    </location>
    <ligand>
        <name>Ca(2+)</name>
        <dbReference type="ChEBI" id="CHEBI:29108"/>
        <label>2</label>
    </ligand>
</feature>
<feature type="binding site" evidence="1">
    <location>
        <position position="215"/>
    </location>
    <ligand>
        <name>Ca(2+)</name>
        <dbReference type="ChEBI" id="CHEBI:29108"/>
        <label>1</label>
    </ligand>
</feature>
<feature type="binding site" evidence="1">
    <location>
        <position position="215"/>
    </location>
    <ligand>
        <name>Ca(2+)</name>
        <dbReference type="ChEBI" id="CHEBI:29108"/>
        <label>2</label>
    </ligand>
</feature>
<feature type="binding site" evidence="1">
    <location>
        <position position="249"/>
    </location>
    <ligand>
        <name>Ca(2+)</name>
        <dbReference type="ChEBI" id="CHEBI:29108"/>
        <label>2</label>
    </ligand>
</feature>
<feature type="binding site" evidence="1">
    <location>
        <position position="250"/>
    </location>
    <ligand>
        <name>Ca(2+)</name>
        <dbReference type="ChEBI" id="CHEBI:29108"/>
        <label>1</label>
    </ligand>
</feature>
<feature type="binding site" evidence="1">
    <location>
        <position position="250"/>
    </location>
    <ligand>
        <name>Ca(2+)</name>
        <dbReference type="ChEBI" id="CHEBI:29108"/>
        <label>2</label>
    </ligand>
</feature>
<feature type="binding site" evidence="1">
    <location>
        <position position="251"/>
    </location>
    <ligand>
        <name>cyanocob(III)alamin</name>
        <dbReference type="ChEBI" id="CHEBI:17439"/>
    </ligand>
</feature>
<feature type="binding site" evidence="1">
    <location>
        <position position="261"/>
    </location>
    <ligand>
        <name>Ca(2+)</name>
        <dbReference type="ChEBI" id="CHEBI:29108"/>
        <label>2</label>
    </ligand>
</feature>
<feature type="binding site" evidence="1">
    <location>
        <position position="309"/>
    </location>
    <ligand>
        <name>cyanocob(III)alamin</name>
        <dbReference type="ChEBI" id="CHEBI:17439"/>
    </ligand>
</feature>
<feature type="binding site" evidence="1">
    <location>
        <position position="517"/>
    </location>
    <ligand>
        <name>cyanocob(III)alamin</name>
        <dbReference type="ChEBI" id="CHEBI:17439"/>
    </ligand>
</feature>
<feature type="binding site" evidence="1">
    <location>
        <position position="551"/>
    </location>
    <ligand>
        <name>cyanocob(III)alamin</name>
        <dbReference type="ChEBI" id="CHEBI:17439"/>
    </ligand>
</feature>
<proteinExistence type="inferred from homology"/>
<protein>
    <recommendedName>
        <fullName evidence="1">Vitamin B12 transporter BtuB</fullName>
    </recommendedName>
    <alternativeName>
        <fullName evidence="1">Cobalamin receptor</fullName>
    </alternativeName>
    <alternativeName>
        <fullName evidence="1">Outer membrane cobalamin translocator</fullName>
    </alternativeName>
</protein>
<reference key="1">
    <citation type="journal article" date="2006" name="Proc. Natl. Acad. Sci. U.S.A.">
        <title>Identification of genes subject to positive selection in uropathogenic strains of Escherichia coli: a comparative genomics approach.</title>
        <authorList>
            <person name="Chen S.L."/>
            <person name="Hung C.-S."/>
            <person name="Xu J."/>
            <person name="Reigstad C.S."/>
            <person name="Magrini V."/>
            <person name="Sabo A."/>
            <person name="Blasiar D."/>
            <person name="Bieri T."/>
            <person name="Meyer R.R."/>
            <person name="Ozersky P."/>
            <person name="Armstrong J.R."/>
            <person name="Fulton R.S."/>
            <person name="Latreille J.P."/>
            <person name="Spieth J."/>
            <person name="Hooton T.M."/>
            <person name="Mardis E.R."/>
            <person name="Hultgren S.J."/>
            <person name="Gordon J.I."/>
        </authorList>
    </citation>
    <scope>NUCLEOTIDE SEQUENCE [LARGE SCALE GENOMIC DNA]</scope>
    <source>
        <strain>UTI89 / UPEC</strain>
    </source>
</reference>
<comment type="function">
    <text evidence="1">Involved in the active translocation of vitamin B12 (cyanocobalamin) across the outer membrane to the periplasmic space. It derives its energy for transport by interacting with the trans-periplasmic membrane protein TonB.</text>
</comment>
<comment type="subcellular location">
    <subcellularLocation>
        <location evidence="1">Cell outer membrane</location>
        <topology evidence="1">Multi-pass membrane protein</topology>
    </subcellularLocation>
</comment>
<comment type="similarity">
    <text evidence="1">Belongs to the TonB-dependent receptor family. BtuB (TC 1.B.14.3.1) subfamily.</text>
</comment>
<comment type="sequence caution" evidence="3">
    <conflict type="erroneous initiation">
        <sequence resource="EMBL-CDS" id="ABE09973"/>
    </conflict>
</comment>
<organism>
    <name type="scientific">Escherichia coli (strain UTI89 / UPEC)</name>
    <dbReference type="NCBI Taxonomy" id="364106"/>
    <lineage>
        <taxon>Bacteria</taxon>
        <taxon>Pseudomonadati</taxon>
        <taxon>Pseudomonadota</taxon>
        <taxon>Gammaproteobacteria</taxon>
        <taxon>Enterobacterales</taxon>
        <taxon>Enterobacteriaceae</taxon>
        <taxon>Escherichia</taxon>
    </lineage>
</organism>
<evidence type="ECO:0000255" key="1">
    <source>
        <dbReference type="HAMAP-Rule" id="MF_01531"/>
    </source>
</evidence>
<evidence type="ECO:0000255" key="2">
    <source>
        <dbReference type="PROSITE-ProRule" id="PRU01360"/>
    </source>
</evidence>
<evidence type="ECO:0000305" key="3"/>